<keyword id="KW-0030">Aminoacyl-tRNA synthetase</keyword>
<keyword id="KW-0067">ATP-binding</keyword>
<keyword id="KW-0963">Cytoplasm</keyword>
<keyword id="KW-0436">Ligase</keyword>
<keyword id="KW-0547">Nucleotide-binding</keyword>
<keyword id="KW-0648">Protein biosynthesis</keyword>
<keyword id="KW-1185">Reference proteome</keyword>
<evidence type="ECO:0000255" key="1">
    <source>
        <dbReference type="HAMAP-Rule" id="MF_00140"/>
    </source>
</evidence>
<protein>
    <recommendedName>
        <fullName evidence="1">Tryptophan--tRNA ligase</fullName>
        <ecNumber evidence="1">6.1.1.2</ecNumber>
    </recommendedName>
    <alternativeName>
        <fullName evidence="1">Tryptophanyl-tRNA synthetase</fullName>
        <shortName evidence="1">TrpRS</shortName>
    </alternativeName>
</protein>
<sequence length="334" mass="37424">MTKPIVFSGAQPSGELTIGNYMGALRQWVNMQDDYHCIYCIVDQHAITVRQDAQKLRKATLDTLALYLACGIDPEKSTIFVQSHVPEHAQLGWALNCYTYFGELSRMTQFKDKSARYAENINAGLFDYPVLMAADILLYQTNLVPVGEDQKQHLELSRDIAQRFNALYGDIFKVPEPFIPKSGARVMSLLEPTKKMSKSDDNRNNVIGLLEDPKSVVKKIKRAVTDSDEPPVVRYDVQNKAGVSNLLDILSAVTGQSIPELEKQFEGKMYGHLKGEVADAVSGMLTELQERYHRFRNDEAFLQQVMKDGAEKASAHASRTLKAVYEAIGFVAKP</sequence>
<comment type="function">
    <text evidence="1">Catalyzes the attachment of tryptophan to tRNA(Trp).</text>
</comment>
<comment type="catalytic activity">
    <reaction evidence="1">
        <text>tRNA(Trp) + L-tryptophan + ATP = L-tryptophyl-tRNA(Trp) + AMP + diphosphate + H(+)</text>
        <dbReference type="Rhea" id="RHEA:24080"/>
        <dbReference type="Rhea" id="RHEA-COMP:9671"/>
        <dbReference type="Rhea" id="RHEA-COMP:9705"/>
        <dbReference type="ChEBI" id="CHEBI:15378"/>
        <dbReference type="ChEBI" id="CHEBI:30616"/>
        <dbReference type="ChEBI" id="CHEBI:33019"/>
        <dbReference type="ChEBI" id="CHEBI:57912"/>
        <dbReference type="ChEBI" id="CHEBI:78442"/>
        <dbReference type="ChEBI" id="CHEBI:78535"/>
        <dbReference type="ChEBI" id="CHEBI:456215"/>
        <dbReference type="EC" id="6.1.1.2"/>
    </reaction>
</comment>
<comment type="subunit">
    <text evidence="1">Homodimer.</text>
</comment>
<comment type="subcellular location">
    <subcellularLocation>
        <location evidence="1">Cytoplasm</location>
    </subcellularLocation>
</comment>
<comment type="similarity">
    <text evidence="1">Belongs to the class-I aminoacyl-tRNA synthetase family.</text>
</comment>
<dbReference type="EC" id="6.1.1.2" evidence="1"/>
<dbReference type="EMBL" id="AE005174">
    <property type="protein sequence ID" value="AAG58484.1"/>
    <property type="molecule type" value="Genomic_DNA"/>
</dbReference>
<dbReference type="EMBL" id="BA000007">
    <property type="protein sequence ID" value="BAB37649.1"/>
    <property type="molecule type" value="Genomic_DNA"/>
</dbReference>
<dbReference type="PIR" id="B91157">
    <property type="entry name" value="B91157"/>
</dbReference>
<dbReference type="PIR" id="H86002">
    <property type="entry name" value="H86002"/>
</dbReference>
<dbReference type="RefSeq" id="NP_312253.1">
    <property type="nucleotide sequence ID" value="NC_002695.1"/>
</dbReference>
<dbReference type="RefSeq" id="WP_000165543.1">
    <property type="nucleotide sequence ID" value="NZ_VOAI01000004.1"/>
</dbReference>
<dbReference type="SMR" id="P67589"/>
<dbReference type="STRING" id="155864.Z4737"/>
<dbReference type="GeneID" id="75060042"/>
<dbReference type="GeneID" id="915919"/>
<dbReference type="KEGG" id="ece:Z4737"/>
<dbReference type="KEGG" id="ecs:ECs_4226"/>
<dbReference type="PATRIC" id="fig|386585.9.peg.4412"/>
<dbReference type="eggNOG" id="COG0180">
    <property type="taxonomic scope" value="Bacteria"/>
</dbReference>
<dbReference type="HOGENOM" id="CLU_029244_1_1_6"/>
<dbReference type="OMA" id="GWGQFKP"/>
<dbReference type="Proteomes" id="UP000000558">
    <property type="component" value="Chromosome"/>
</dbReference>
<dbReference type="Proteomes" id="UP000002519">
    <property type="component" value="Chromosome"/>
</dbReference>
<dbReference type="GO" id="GO:0005829">
    <property type="term" value="C:cytosol"/>
    <property type="evidence" value="ECO:0007669"/>
    <property type="project" value="TreeGrafter"/>
</dbReference>
<dbReference type="GO" id="GO:0005524">
    <property type="term" value="F:ATP binding"/>
    <property type="evidence" value="ECO:0007669"/>
    <property type="project" value="UniProtKB-UniRule"/>
</dbReference>
<dbReference type="GO" id="GO:0004830">
    <property type="term" value="F:tryptophan-tRNA ligase activity"/>
    <property type="evidence" value="ECO:0007669"/>
    <property type="project" value="UniProtKB-UniRule"/>
</dbReference>
<dbReference type="GO" id="GO:0006436">
    <property type="term" value="P:tryptophanyl-tRNA aminoacylation"/>
    <property type="evidence" value="ECO:0007669"/>
    <property type="project" value="UniProtKB-UniRule"/>
</dbReference>
<dbReference type="CDD" id="cd00806">
    <property type="entry name" value="TrpRS_core"/>
    <property type="match status" value="1"/>
</dbReference>
<dbReference type="FunFam" id="1.10.240.10:FF:000002">
    <property type="entry name" value="Tryptophan--tRNA ligase"/>
    <property type="match status" value="1"/>
</dbReference>
<dbReference type="FunFam" id="3.40.50.620:FF:000024">
    <property type="entry name" value="Tryptophan--tRNA ligase"/>
    <property type="match status" value="1"/>
</dbReference>
<dbReference type="Gene3D" id="3.40.50.620">
    <property type="entry name" value="HUPs"/>
    <property type="match status" value="1"/>
</dbReference>
<dbReference type="Gene3D" id="1.10.240.10">
    <property type="entry name" value="Tyrosyl-Transfer RNA Synthetase"/>
    <property type="match status" value="1"/>
</dbReference>
<dbReference type="HAMAP" id="MF_00140_B">
    <property type="entry name" value="Trp_tRNA_synth_B"/>
    <property type="match status" value="1"/>
</dbReference>
<dbReference type="InterPro" id="IPR001412">
    <property type="entry name" value="aa-tRNA-synth_I_CS"/>
</dbReference>
<dbReference type="InterPro" id="IPR002305">
    <property type="entry name" value="aa-tRNA-synth_Ic"/>
</dbReference>
<dbReference type="InterPro" id="IPR014729">
    <property type="entry name" value="Rossmann-like_a/b/a_fold"/>
</dbReference>
<dbReference type="InterPro" id="IPR002306">
    <property type="entry name" value="Trp-tRNA-ligase"/>
</dbReference>
<dbReference type="InterPro" id="IPR024109">
    <property type="entry name" value="Trp-tRNA-ligase_bac-type"/>
</dbReference>
<dbReference type="InterPro" id="IPR050203">
    <property type="entry name" value="Trp-tRNA_synthetase"/>
</dbReference>
<dbReference type="NCBIfam" id="TIGR00233">
    <property type="entry name" value="trpS"/>
    <property type="match status" value="1"/>
</dbReference>
<dbReference type="PANTHER" id="PTHR43766">
    <property type="entry name" value="TRYPTOPHAN--TRNA LIGASE, MITOCHONDRIAL"/>
    <property type="match status" value="1"/>
</dbReference>
<dbReference type="PANTHER" id="PTHR43766:SF1">
    <property type="entry name" value="TRYPTOPHAN--TRNA LIGASE, MITOCHONDRIAL"/>
    <property type="match status" value="1"/>
</dbReference>
<dbReference type="Pfam" id="PF00579">
    <property type="entry name" value="tRNA-synt_1b"/>
    <property type="match status" value="1"/>
</dbReference>
<dbReference type="PRINTS" id="PR01039">
    <property type="entry name" value="TRNASYNTHTRP"/>
</dbReference>
<dbReference type="SUPFAM" id="SSF52374">
    <property type="entry name" value="Nucleotidylyl transferase"/>
    <property type="match status" value="1"/>
</dbReference>
<dbReference type="PROSITE" id="PS00178">
    <property type="entry name" value="AA_TRNA_LIGASE_I"/>
    <property type="match status" value="1"/>
</dbReference>
<name>SYW_ECO57</name>
<proteinExistence type="inferred from homology"/>
<reference key="1">
    <citation type="journal article" date="2001" name="Nature">
        <title>Genome sequence of enterohaemorrhagic Escherichia coli O157:H7.</title>
        <authorList>
            <person name="Perna N.T."/>
            <person name="Plunkett G. III"/>
            <person name="Burland V."/>
            <person name="Mau B."/>
            <person name="Glasner J.D."/>
            <person name="Rose D.J."/>
            <person name="Mayhew G.F."/>
            <person name="Evans P.S."/>
            <person name="Gregor J."/>
            <person name="Kirkpatrick H.A."/>
            <person name="Posfai G."/>
            <person name="Hackett J."/>
            <person name="Klink S."/>
            <person name="Boutin A."/>
            <person name="Shao Y."/>
            <person name="Miller L."/>
            <person name="Grotbeck E.J."/>
            <person name="Davis N.W."/>
            <person name="Lim A."/>
            <person name="Dimalanta E.T."/>
            <person name="Potamousis K."/>
            <person name="Apodaca J."/>
            <person name="Anantharaman T.S."/>
            <person name="Lin J."/>
            <person name="Yen G."/>
            <person name="Schwartz D.C."/>
            <person name="Welch R.A."/>
            <person name="Blattner F.R."/>
        </authorList>
    </citation>
    <scope>NUCLEOTIDE SEQUENCE [LARGE SCALE GENOMIC DNA]</scope>
    <source>
        <strain>O157:H7 / EDL933 / ATCC 700927 / EHEC</strain>
    </source>
</reference>
<reference key="2">
    <citation type="journal article" date="2001" name="DNA Res.">
        <title>Complete genome sequence of enterohemorrhagic Escherichia coli O157:H7 and genomic comparison with a laboratory strain K-12.</title>
        <authorList>
            <person name="Hayashi T."/>
            <person name="Makino K."/>
            <person name="Ohnishi M."/>
            <person name="Kurokawa K."/>
            <person name="Ishii K."/>
            <person name="Yokoyama K."/>
            <person name="Han C.-G."/>
            <person name="Ohtsubo E."/>
            <person name="Nakayama K."/>
            <person name="Murata T."/>
            <person name="Tanaka M."/>
            <person name="Tobe T."/>
            <person name="Iida T."/>
            <person name="Takami H."/>
            <person name="Honda T."/>
            <person name="Sasakawa C."/>
            <person name="Ogasawara N."/>
            <person name="Yasunaga T."/>
            <person name="Kuhara S."/>
            <person name="Shiba T."/>
            <person name="Hattori M."/>
            <person name="Shinagawa H."/>
        </authorList>
    </citation>
    <scope>NUCLEOTIDE SEQUENCE [LARGE SCALE GENOMIC DNA]</scope>
    <source>
        <strain>O157:H7 / Sakai / RIMD 0509952 / EHEC</strain>
    </source>
</reference>
<gene>
    <name evidence="1" type="primary">trpS</name>
    <name type="ordered locus">Z4737</name>
    <name type="ordered locus">ECs4226</name>
</gene>
<feature type="chain" id="PRO_0000136630" description="Tryptophan--tRNA ligase">
    <location>
        <begin position="1"/>
        <end position="334"/>
    </location>
</feature>
<feature type="short sequence motif" description="'HIGH' region" evidence="1">
    <location>
        <begin position="12"/>
        <end position="20"/>
    </location>
</feature>
<feature type="short sequence motif" description="'KMSKS' region" evidence="1">
    <location>
        <begin position="195"/>
        <end position="199"/>
    </location>
</feature>
<feature type="binding site" evidence="1">
    <location>
        <begin position="11"/>
        <end position="13"/>
    </location>
    <ligand>
        <name>ATP</name>
        <dbReference type="ChEBI" id="CHEBI:30616"/>
    </ligand>
</feature>
<feature type="binding site" evidence="1">
    <location>
        <begin position="19"/>
        <end position="20"/>
    </location>
    <ligand>
        <name>ATP</name>
        <dbReference type="ChEBI" id="CHEBI:30616"/>
    </ligand>
</feature>
<feature type="binding site" evidence="1">
    <location>
        <position position="135"/>
    </location>
    <ligand>
        <name>L-tryptophan</name>
        <dbReference type="ChEBI" id="CHEBI:57912"/>
    </ligand>
</feature>
<feature type="binding site" evidence="1">
    <location>
        <begin position="147"/>
        <end position="149"/>
    </location>
    <ligand>
        <name>ATP</name>
        <dbReference type="ChEBI" id="CHEBI:30616"/>
    </ligand>
</feature>
<feature type="binding site" evidence="1">
    <location>
        <position position="186"/>
    </location>
    <ligand>
        <name>ATP</name>
        <dbReference type="ChEBI" id="CHEBI:30616"/>
    </ligand>
</feature>
<feature type="binding site" evidence="1">
    <location>
        <begin position="195"/>
        <end position="199"/>
    </location>
    <ligand>
        <name>ATP</name>
        <dbReference type="ChEBI" id="CHEBI:30616"/>
    </ligand>
</feature>
<organism>
    <name type="scientific">Escherichia coli O157:H7</name>
    <dbReference type="NCBI Taxonomy" id="83334"/>
    <lineage>
        <taxon>Bacteria</taxon>
        <taxon>Pseudomonadati</taxon>
        <taxon>Pseudomonadota</taxon>
        <taxon>Gammaproteobacteria</taxon>
        <taxon>Enterobacterales</taxon>
        <taxon>Enterobacteriaceae</taxon>
        <taxon>Escherichia</taxon>
    </lineage>
</organism>
<accession>P67589</accession>
<accession>Q8X832</accession>